<feature type="signal peptide" evidence="2">
    <location>
        <begin position="1"/>
        <end position="18"/>
    </location>
</feature>
<feature type="propeptide" id="PRO_0000025854" description="Activation peptide">
    <location>
        <begin position="19"/>
        <end position="75"/>
    </location>
</feature>
<feature type="chain" id="PRO_0000025855" description="Candidapepsin-4">
    <location>
        <begin position="76"/>
        <end position="417"/>
    </location>
</feature>
<feature type="domain" description="Peptidase A1" evidence="3">
    <location>
        <begin position="89"/>
        <end position="403"/>
    </location>
</feature>
<feature type="active site" evidence="4">
    <location>
        <position position="107"/>
    </location>
</feature>
<feature type="active site" evidence="4">
    <location>
        <position position="293"/>
    </location>
</feature>
<feature type="glycosylation site" description="N-linked (GlcNAc...) asparagine" evidence="2">
    <location>
        <position position="137"/>
    </location>
</feature>
<feature type="disulfide bond" evidence="1">
    <location>
        <begin position="122"/>
        <end position="134"/>
    </location>
</feature>
<feature type="disulfide bond" evidence="1">
    <location>
        <begin position="331"/>
        <end position="369"/>
    </location>
</feature>
<comment type="catalytic activity">
    <reaction>
        <text>Preferential cleavage at the carboxyl of hydrophobic amino acids, but fails to cleave 15-Leu-|-Tyr-16, 16-Tyr-|-Leu-17 and 24-Phe-|-Phe-25 of insulin B chain. Activates trypsinogen, and degrades keratin.</text>
        <dbReference type="EC" id="3.4.23.24"/>
    </reaction>
</comment>
<comment type="subcellular location">
    <subcellularLocation>
        <location>Secreted</location>
    </subcellularLocation>
</comment>
<comment type="PTM">
    <text evidence="1">O-glycosylated.</text>
</comment>
<comment type="similarity">
    <text evidence="5">Belongs to the peptidase A1 family.</text>
</comment>
<accession>P43093</accession>
<accession>C4YSF5</accession>
<dbReference type="EC" id="3.4.23.24"/>
<dbReference type="EMBL" id="L25388">
    <property type="protein sequence ID" value="AAA17877.1"/>
    <property type="molecule type" value="Unassigned_DNA"/>
</dbReference>
<dbReference type="EMBL" id="CM000312">
    <property type="protein sequence ID" value="EEQ46658.1"/>
    <property type="molecule type" value="Genomic_DNA"/>
</dbReference>
<dbReference type="PIR" id="A55524">
    <property type="entry name" value="A55524"/>
</dbReference>
<dbReference type="SMR" id="P43093"/>
<dbReference type="ChEMBL" id="CHEMBL6179"/>
<dbReference type="MEROPS" id="A01.062"/>
<dbReference type="GlyCosmos" id="P43093">
    <property type="glycosylation" value="1 site, No reported glycans"/>
</dbReference>
<dbReference type="PaxDb" id="5476-P43093"/>
<dbReference type="VEuPathDB" id="FungiDB:CAWG_05020"/>
<dbReference type="HOGENOM" id="CLU_013253_9_1_1"/>
<dbReference type="OMA" id="NAVCIPK"/>
<dbReference type="OrthoDB" id="20489at766764"/>
<dbReference type="BRENDA" id="3.4.23.24">
    <property type="organism ID" value="1096"/>
</dbReference>
<dbReference type="PHI-base" id="PHI:125"/>
<dbReference type="Proteomes" id="UP000001429">
    <property type="component" value="Chromosome 6"/>
</dbReference>
<dbReference type="GO" id="GO:0005576">
    <property type="term" value="C:extracellular region"/>
    <property type="evidence" value="ECO:0007669"/>
    <property type="project" value="UniProtKB-SubCell"/>
</dbReference>
<dbReference type="GO" id="GO:0004190">
    <property type="term" value="F:aspartic-type endopeptidase activity"/>
    <property type="evidence" value="ECO:0007669"/>
    <property type="project" value="UniProtKB-KW"/>
</dbReference>
<dbReference type="GO" id="GO:0006508">
    <property type="term" value="P:proteolysis"/>
    <property type="evidence" value="ECO:0007669"/>
    <property type="project" value="UniProtKB-KW"/>
</dbReference>
<dbReference type="CDD" id="cd05474">
    <property type="entry name" value="SAP_like"/>
    <property type="match status" value="1"/>
</dbReference>
<dbReference type="FunFam" id="2.40.70.10:FF:000011">
    <property type="entry name" value="Aspartic protease"/>
    <property type="match status" value="1"/>
</dbReference>
<dbReference type="FunFam" id="2.40.70.10:FF:000023">
    <property type="entry name" value="Aspartic protease"/>
    <property type="match status" value="1"/>
</dbReference>
<dbReference type="Gene3D" id="2.40.70.10">
    <property type="entry name" value="Acid Proteases"/>
    <property type="match status" value="2"/>
</dbReference>
<dbReference type="InterPro" id="IPR001461">
    <property type="entry name" value="Aspartic_peptidase_A1"/>
</dbReference>
<dbReference type="InterPro" id="IPR001969">
    <property type="entry name" value="Aspartic_peptidase_AS"/>
</dbReference>
<dbReference type="InterPro" id="IPR033121">
    <property type="entry name" value="PEPTIDASE_A1"/>
</dbReference>
<dbReference type="InterPro" id="IPR021109">
    <property type="entry name" value="Peptidase_aspartic_dom_sf"/>
</dbReference>
<dbReference type="InterPro" id="IPR033876">
    <property type="entry name" value="SAP-like"/>
</dbReference>
<dbReference type="PANTHER" id="PTHR47966:SF65">
    <property type="entry name" value="ASPARTIC-TYPE ENDOPEPTIDASE"/>
    <property type="match status" value="1"/>
</dbReference>
<dbReference type="PANTHER" id="PTHR47966">
    <property type="entry name" value="BETA-SITE APP-CLEAVING ENZYME, ISOFORM A-RELATED"/>
    <property type="match status" value="1"/>
</dbReference>
<dbReference type="Pfam" id="PF00026">
    <property type="entry name" value="Asp"/>
    <property type="match status" value="1"/>
</dbReference>
<dbReference type="PRINTS" id="PR00792">
    <property type="entry name" value="PEPSIN"/>
</dbReference>
<dbReference type="SUPFAM" id="SSF50630">
    <property type="entry name" value="Acid proteases"/>
    <property type="match status" value="1"/>
</dbReference>
<dbReference type="PROSITE" id="PS00141">
    <property type="entry name" value="ASP_PROTEASE"/>
    <property type="match status" value="2"/>
</dbReference>
<dbReference type="PROSITE" id="PS51767">
    <property type="entry name" value="PEPTIDASE_A1"/>
    <property type="match status" value="1"/>
</dbReference>
<organism>
    <name type="scientific">Candida albicans (strain WO-1)</name>
    <name type="common">Yeast</name>
    <dbReference type="NCBI Taxonomy" id="294748"/>
    <lineage>
        <taxon>Eukaryota</taxon>
        <taxon>Fungi</taxon>
        <taxon>Dikarya</taxon>
        <taxon>Ascomycota</taxon>
        <taxon>Saccharomycotina</taxon>
        <taxon>Pichiomycetes</taxon>
        <taxon>Debaryomycetaceae</taxon>
        <taxon>Candida/Lodderomyces clade</taxon>
        <taxon>Candida</taxon>
    </lineage>
</organism>
<proteinExistence type="inferred from homology"/>
<name>CARP4_CANAW</name>
<gene>
    <name type="primary">SAP4</name>
    <name type="ORF">CAWG_05020</name>
</gene>
<reference key="1">
    <citation type="journal article" date="1994" name="J. Bacteriol.">
        <title>A fourth secreted aspartyl proteinase gene (SAP4) and a CARE2 repetitive element are located upstream of the SAP1 gene in Candida albicans.</title>
        <authorList>
            <person name="Miyasaki S.H."/>
            <person name="White T.C."/>
            <person name="Agabian N."/>
        </authorList>
    </citation>
    <scope>NUCLEOTIDE SEQUENCE [GENOMIC DNA]</scope>
    <source>
        <strain>WO-1</strain>
    </source>
</reference>
<reference key="2">
    <citation type="journal article" date="2009" name="Nature">
        <title>Evolution of pathogenicity and sexual reproduction in eight Candida genomes.</title>
        <authorList>
            <person name="Butler G."/>
            <person name="Rasmussen M.D."/>
            <person name="Lin M.F."/>
            <person name="Santos M.A.S."/>
            <person name="Sakthikumar S."/>
            <person name="Munro C.A."/>
            <person name="Rheinbay E."/>
            <person name="Grabherr M."/>
            <person name="Forche A."/>
            <person name="Reedy J.L."/>
            <person name="Agrafioti I."/>
            <person name="Arnaud M.B."/>
            <person name="Bates S."/>
            <person name="Brown A.J.P."/>
            <person name="Brunke S."/>
            <person name="Costanzo M.C."/>
            <person name="Fitzpatrick D.A."/>
            <person name="de Groot P.W.J."/>
            <person name="Harris D."/>
            <person name="Hoyer L.L."/>
            <person name="Hube B."/>
            <person name="Klis F.M."/>
            <person name="Kodira C."/>
            <person name="Lennard N."/>
            <person name="Logue M.E."/>
            <person name="Martin R."/>
            <person name="Neiman A.M."/>
            <person name="Nikolaou E."/>
            <person name="Quail M.A."/>
            <person name="Quinn J."/>
            <person name="Santos M.C."/>
            <person name="Schmitzberger F.F."/>
            <person name="Sherlock G."/>
            <person name="Shah P."/>
            <person name="Silverstein K.A.T."/>
            <person name="Skrzypek M.S."/>
            <person name="Soll D."/>
            <person name="Staggs R."/>
            <person name="Stansfield I."/>
            <person name="Stumpf M.P.H."/>
            <person name="Sudbery P.E."/>
            <person name="Srikantha T."/>
            <person name="Zeng Q."/>
            <person name="Berman J."/>
            <person name="Berriman M."/>
            <person name="Heitman J."/>
            <person name="Gow N.A.R."/>
            <person name="Lorenz M.C."/>
            <person name="Birren B.W."/>
            <person name="Kellis M."/>
            <person name="Cuomo C.A."/>
        </authorList>
    </citation>
    <scope>NUCLEOTIDE SEQUENCE [LARGE SCALE GENOMIC DNA]</scope>
    <source>
        <strain>WO-1</strain>
    </source>
</reference>
<evidence type="ECO:0000250" key="1"/>
<evidence type="ECO:0000255" key="2"/>
<evidence type="ECO:0000255" key="3">
    <source>
        <dbReference type="PROSITE-ProRule" id="PRU01103"/>
    </source>
</evidence>
<evidence type="ECO:0000255" key="4">
    <source>
        <dbReference type="PROSITE-ProRule" id="PRU10094"/>
    </source>
</evidence>
<evidence type="ECO:0000305" key="5"/>
<sequence length="417" mass="45318">MFLQNILSVLAFALLIDAAPVKRSTGFVTLDFNVKRSLVDPKDPTVEVKRSPLFLDIEPTEIPVDDTGRNDVGKRGPVAVKLDNEIITYSADITIGSNNQKLSVIVDTGSSDLWVPDSNAVCIPKWPGDRGDFCKNNGSYSPAASSTSKNLNTPFEIKYADGSVAQGNLYQDTVGIGGVSVRDQLFANVRSTSAHKGILGIGFQSNEATRTPYDNLPITLKKQGIISKNAYSLFLNSPEASSGQIIFGGIDKAKYSGSLVDLPITSDRTLSVGLRSVNVMGQNVNVNAGVLLDSGTTISYFTPNIARSIIYALGGQVHYDSSGNEAYVADCKTSGTVDFQFDRNLKISVPASEFLYQLYYTNGEPYPKCEIRVRESEDNILGDNFMRSAYIVYDLDDRKISMAQVKYTSQSNIVGIN</sequence>
<protein>
    <recommendedName>
        <fullName>Candidapepsin-4</fullName>
        <ecNumber>3.4.23.24</ecNumber>
    </recommendedName>
    <alternativeName>
        <fullName>ACP 4</fullName>
    </alternativeName>
    <alternativeName>
        <fullName>Aspartate protease 4</fullName>
    </alternativeName>
    <alternativeName>
        <fullName>Secreted aspartic protease 4</fullName>
    </alternativeName>
</protein>
<keyword id="KW-0064">Aspartyl protease</keyword>
<keyword id="KW-0165">Cleavage on pair of basic residues</keyword>
<keyword id="KW-1015">Disulfide bond</keyword>
<keyword id="KW-0325">Glycoprotein</keyword>
<keyword id="KW-0378">Hydrolase</keyword>
<keyword id="KW-0645">Protease</keyword>
<keyword id="KW-0964">Secreted</keyword>
<keyword id="KW-0732">Signal</keyword>
<keyword id="KW-0865">Zymogen</keyword>